<sequence>MSLEREEPQHFGAGPAQMPTPVLQQAAKDLINFNDIGLGIGEISHRSKDATKVIEDSKKHLIELLNIPDTHEVFYLQGGGTTGFSSVATNLAAAYVGKHGKIAPAGYLVTGSWSQKSFEEAKRLHVPAEVIFNAKDYNNGKFGKIPDESLWEDKIKGKAFSYVYLCENETVHGVEWPELPKCLVNDPNIEIVADLSSDILSRKIDVSQYGVIMAGAQKNIGLAGLTLYIIKKSILKNISGASDETLHELGVPITPIAFDYPTVVKNNSAYNTIPIFTLHVMDLVFQHILKKGGVEAQQAENEEKAKILYEALDANSDFYNVPVDPKCRSKMNVVFTLKKDGLDDQFLKEAAARHLTGLKGHRSVGGFRASIYNALSVKAVQNLVDFIKEFAEKNA</sequence>
<feature type="chain" id="PRO_0000150141" description="Phosphoserine aminotransferase">
    <location>
        <begin position="1"/>
        <end position="395"/>
    </location>
</feature>
<feature type="binding site" evidence="1">
    <location>
        <begin position="80"/>
        <end position="81"/>
    </location>
    <ligand>
        <name>pyridoxal 5'-phosphate</name>
        <dbReference type="ChEBI" id="CHEBI:597326"/>
    </ligand>
</feature>
<feature type="binding site" evidence="1">
    <location>
        <position position="113"/>
    </location>
    <ligand>
        <name>pyridoxal 5'-phosphate</name>
        <dbReference type="ChEBI" id="CHEBI:597326"/>
    </ligand>
</feature>
<feature type="binding site" evidence="1">
    <location>
        <position position="170"/>
    </location>
    <ligand>
        <name>pyridoxal 5'-phosphate</name>
        <dbReference type="ChEBI" id="CHEBI:597326"/>
    </ligand>
</feature>
<feature type="binding site" evidence="1">
    <location>
        <position position="194"/>
    </location>
    <ligand>
        <name>pyridoxal 5'-phosphate</name>
        <dbReference type="ChEBI" id="CHEBI:597326"/>
    </ligand>
</feature>
<feature type="binding site" evidence="1">
    <location>
        <position position="217"/>
    </location>
    <ligand>
        <name>pyridoxal 5'-phosphate</name>
        <dbReference type="ChEBI" id="CHEBI:597326"/>
    </ligand>
</feature>
<feature type="binding site" evidence="1">
    <location>
        <begin position="271"/>
        <end position="272"/>
    </location>
    <ligand>
        <name>pyridoxal 5'-phosphate</name>
        <dbReference type="ChEBI" id="CHEBI:597326"/>
    </ligand>
</feature>
<feature type="modified residue" description="Phosphothreonine" evidence="12 13">
    <location>
        <position position="20"/>
    </location>
</feature>
<feature type="modified residue" description="Phosphoserine" evidence="12">
    <location>
        <position position="112"/>
    </location>
</feature>
<feature type="modified residue" description="N6-(pyridoxal phosphate)lysine" evidence="1">
    <location>
        <position position="218"/>
    </location>
</feature>
<feature type="sequence conflict" description="In Ref. 2; AAA85703." evidence="11" ref="2">
    <original>FD</original>
    <variation>LH</variation>
    <location>
        <begin position="258"/>
        <end position="259"/>
    </location>
</feature>
<feature type="helix" evidence="14">
    <location>
        <begin position="58"/>
        <end position="65"/>
    </location>
</feature>
<feature type="strand" evidence="14">
    <location>
        <begin position="71"/>
        <end position="77"/>
    </location>
</feature>
<feature type="helix" evidence="14">
    <location>
        <begin position="80"/>
        <end position="98"/>
    </location>
</feature>
<feature type="strand" evidence="14">
    <location>
        <begin position="99"/>
        <end position="101"/>
    </location>
</feature>
<feature type="strand" evidence="14">
    <location>
        <begin position="105"/>
        <end position="109"/>
    </location>
</feature>
<feature type="helix" evidence="14">
    <location>
        <begin position="112"/>
        <end position="124"/>
    </location>
</feature>
<feature type="strand" evidence="14">
    <location>
        <begin position="128"/>
        <end position="133"/>
    </location>
</feature>
<feature type="helix" evidence="14">
    <location>
        <begin position="134"/>
        <end position="137"/>
    </location>
</feature>
<feature type="turn" evidence="14">
    <location>
        <begin position="138"/>
        <end position="140"/>
    </location>
</feature>
<feature type="helix" evidence="14">
    <location>
        <begin position="149"/>
        <end position="156"/>
    </location>
</feature>
<feature type="strand" evidence="14">
    <location>
        <begin position="163"/>
        <end position="169"/>
    </location>
</feature>
<feature type="turn" evidence="14">
    <location>
        <begin position="170"/>
        <end position="173"/>
    </location>
</feature>
<feature type="helix" evidence="14">
    <location>
        <begin position="181"/>
        <end position="185"/>
    </location>
</feature>
<feature type="strand" evidence="14">
    <location>
        <begin position="191"/>
        <end position="194"/>
    </location>
</feature>
<feature type="turn" evidence="14">
    <location>
        <begin position="196"/>
        <end position="201"/>
    </location>
</feature>
<feature type="helix" evidence="14">
    <location>
        <begin position="206"/>
        <end position="208"/>
    </location>
</feature>
<feature type="strand" evidence="14">
    <location>
        <begin position="210"/>
        <end position="214"/>
    </location>
</feature>
<feature type="strand" evidence="14">
    <location>
        <begin position="224"/>
        <end position="231"/>
    </location>
</feature>
<feature type="helix" evidence="14">
    <location>
        <begin position="232"/>
        <end position="239"/>
    </location>
</feature>
<feature type="helix" evidence="14">
    <location>
        <begin position="244"/>
        <end position="249"/>
    </location>
</feature>
<feature type="helix" evidence="14">
    <location>
        <begin position="256"/>
        <end position="258"/>
    </location>
</feature>
<feature type="helix" evidence="14">
    <location>
        <begin position="260"/>
        <end position="265"/>
    </location>
</feature>
<feature type="helix" evidence="14">
    <location>
        <begin position="277"/>
        <end position="290"/>
    </location>
</feature>
<feature type="helix" evidence="14">
    <location>
        <begin position="293"/>
        <end position="313"/>
    </location>
</feature>
<feature type="strand" evidence="14">
    <location>
        <begin position="315"/>
        <end position="317"/>
    </location>
</feature>
<feature type="helix" evidence="14">
    <location>
        <begin position="325"/>
        <end position="327"/>
    </location>
</feature>
<feature type="strand" evidence="14">
    <location>
        <begin position="330"/>
        <end position="339"/>
    </location>
</feature>
<feature type="helix" evidence="14">
    <location>
        <begin position="340"/>
        <end position="342"/>
    </location>
</feature>
<feature type="helix" evidence="14">
    <location>
        <begin position="343"/>
        <end position="351"/>
    </location>
</feature>
<feature type="turn" evidence="14">
    <location>
        <begin position="352"/>
        <end position="354"/>
    </location>
</feature>
<feature type="strand" evidence="14">
    <location>
        <begin position="362"/>
        <end position="364"/>
    </location>
</feature>
<feature type="strand" evidence="14">
    <location>
        <begin position="366"/>
        <end position="370"/>
    </location>
</feature>
<feature type="helix" evidence="14">
    <location>
        <begin position="377"/>
        <end position="387"/>
    </location>
</feature>
<feature type="helix" evidence="14">
    <location>
        <begin position="390"/>
        <end position="393"/>
    </location>
</feature>
<name>SERC_YEAST</name>
<organism>
    <name type="scientific">Saccharomyces cerevisiae (strain ATCC 204508 / S288c)</name>
    <name type="common">Baker's yeast</name>
    <dbReference type="NCBI Taxonomy" id="559292"/>
    <lineage>
        <taxon>Eukaryota</taxon>
        <taxon>Fungi</taxon>
        <taxon>Dikarya</taxon>
        <taxon>Ascomycota</taxon>
        <taxon>Saccharomycotina</taxon>
        <taxon>Saccharomycetes</taxon>
        <taxon>Saccharomycetales</taxon>
        <taxon>Saccharomycetaceae</taxon>
        <taxon>Saccharomyces</taxon>
    </lineage>
</organism>
<dbReference type="EC" id="2.6.1.52" evidence="3"/>
<dbReference type="EMBL" id="L20917">
    <property type="protein sequence ID" value="AAA20886.1"/>
    <property type="molecule type" value="Genomic_DNA"/>
</dbReference>
<dbReference type="EMBL" id="U19714">
    <property type="protein sequence ID" value="AAA85703.1"/>
    <property type="molecule type" value="Genomic_DNA"/>
</dbReference>
<dbReference type="EMBL" id="Z75092">
    <property type="protein sequence ID" value="CAA99393.1"/>
    <property type="molecule type" value="Genomic_DNA"/>
</dbReference>
<dbReference type="EMBL" id="BK006948">
    <property type="protein sequence ID" value="DAA10956.1"/>
    <property type="molecule type" value="Genomic_DNA"/>
</dbReference>
<dbReference type="PIR" id="S42680">
    <property type="entry name" value="S42680"/>
</dbReference>
<dbReference type="RefSeq" id="NP_014827.3">
    <property type="nucleotide sequence ID" value="NM_001183603.3"/>
</dbReference>
<dbReference type="PDB" id="8I28">
    <property type="method" value="X-ray"/>
    <property type="resolution" value="2.80 A"/>
    <property type="chains" value="A/B=1-395"/>
</dbReference>
<dbReference type="PDBsum" id="8I28"/>
<dbReference type="SMR" id="P33330"/>
<dbReference type="BioGRID" id="34579">
    <property type="interactions" value="326"/>
</dbReference>
<dbReference type="DIP" id="DIP-4686N"/>
<dbReference type="FunCoup" id="P33330">
    <property type="interactions" value="795"/>
</dbReference>
<dbReference type="IntAct" id="P33330">
    <property type="interactions" value="9"/>
</dbReference>
<dbReference type="MINT" id="P33330"/>
<dbReference type="STRING" id="4932.YOR184W"/>
<dbReference type="iPTMnet" id="P33330"/>
<dbReference type="PaxDb" id="4932-YOR184W"/>
<dbReference type="PeptideAtlas" id="P33330"/>
<dbReference type="EnsemblFungi" id="YOR184W_mRNA">
    <property type="protein sequence ID" value="YOR184W"/>
    <property type="gene ID" value="YOR184W"/>
</dbReference>
<dbReference type="GeneID" id="854356"/>
<dbReference type="KEGG" id="sce:YOR184W"/>
<dbReference type="AGR" id="SGD:S000005710"/>
<dbReference type="SGD" id="S000005710">
    <property type="gene designation" value="SER1"/>
</dbReference>
<dbReference type="VEuPathDB" id="FungiDB:YOR184W"/>
<dbReference type="eggNOG" id="KOG2790">
    <property type="taxonomic scope" value="Eukaryota"/>
</dbReference>
<dbReference type="GeneTree" id="ENSGT00940000153241"/>
<dbReference type="HOGENOM" id="CLU_034866_0_0_1"/>
<dbReference type="InParanoid" id="P33330"/>
<dbReference type="OMA" id="AFVYFCD"/>
<dbReference type="OrthoDB" id="1703350at2759"/>
<dbReference type="BioCyc" id="YEAST:YOR184W-MONOMER"/>
<dbReference type="Reactome" id="R-SCE-977347">
    <property type="pathway name" value="Serine biosynthesis"/>
</dbReference>
<dbReference type="UniPathway" id="UPA00135">
    <property type="reaction ID" value="UER00197"/>
</dbReference>
<dbReference type="BioGRID-ORCS" id="854356">
    <property type="hits" value="5 hits in 10 CRISPR screens"/>
</dbReference>
<dbReference type="PRO" id="PR:P33330"/>
<dbReference type="Proteomes" id="UP000002311">
    <property type="component" value="Chromosome XV"/>
</dbReference>
<dbReference type="RNAct" id="P33330">
    <property type="molecule type" value="protein"/>
</dbReference>
<dbReference type="GO" id="GO:0005737">
    <property type="term" value="C:cytoplasm"/>
    <property type="evidence" value="ECO:0007005"/>
    <property type="project" value="SGD"/>
</dbReference>
<dbReference type="GO" id="GO:0004648">
    <property type="term" value="F:O-phospho-L-serine:2-oxoglutarate aminotransferase activity"/>
    <property type="evidence" value="ECO:0000315"/>
    <property type="project" value="SGD"/>
</dbReference>
<dbReference type="GO" id="GO:0030170">
    <property type="term" value="F:pyridoxal phosphate binding"/>
    <property type="evidence" value="ECO:0000318"/>
    <property type="project" value="GO_Central"/>
</dbReference>
<dbReference type="GO" id="GO:0006564">
    <property type="term" value="P:L-serine biosynthetic process"/>
    <property type="evidence" value="ECO:0000315"/>
    <property type="project" value="SGD"/>
</dbReference>
<dbReference type="GO" id="GO:0009113">
    <property type="term" value="P:purine nucleobase biosynthetic process"/>
    <property type="evidence" value="ECO:0000315"/>
    <property type="project" value="SGD"/>
</dbReference>
<dbReference type="CDD" id="cd00611">
    <property type="entry name" value="PSAT_like"/>
    <property type="match status" value="1"/>
</dbReference>
<dbReference type="FunFam" id="3.40.640.10:FF:000082">
    <property type="entry name" value="Phosphoserine aminotransferase"/>
    <property type="match status" value="1"/>
</dbReference>
<dbReference type="FunFam" id="3.90.1150.10:FF:000006">
    <property type="entry name" value="Phosphoserine aminotransferase"/>
    <property type="match status" value="1"/>
</dbReference>
<dbReference type="Gene3D" id="3.90.1150.10">
    <property type="entry name" value="Aspartate Aminotransferase, domain 1"/>
    <property type="match status" value="1"/>
</dbReference>
<dbReference type="Gene3D" id="3.40.640.10">
    <property type="entry name" value="Type I PLP-dependent aspartate aminotransferase-like (Major domain)"/>
    <property type="match status" value="1"/>
</dbReference>
<dbReference type="HAMAP" id="MF_00160">
    <property type="entry name" value="SerC_aminotrans_5"/>
    <property type="match status" value="1"/>
</dbReference>
<dbReference type="InterPro" id="IPR000192">
    <property type="entry name" value="Aminotrans_V_dom"/>
</dbReference>
<dbReference type="InterPro" id="IPR020578">
    <property type="entry name" value="Aminotrans_V_PyrdxlP_BS"/>
</dbReference>
<dbReference type="InterPro" id="IPR022278">
    <property type="entry name" value="Pser_aminoTfrase"/>
</dbReference>
<dbReference type="InterPro" id="IPR015424">
    <property type="entry name" value="PyrdxlP-dep_Trfase"/>
</dbReference>
<dbReference type="InterPro" id="IPR015421">
    <property type="entry name" value="PyrdxlP-dep_Trfase_major"/>
</dbReference>
<dbReference type="InterPro" id="IPR015422">
    <property type="entry name" value="PyrdxlP-dep_Trfase_small"/>
</dbReference>
<dbReference type="NCBIfam" id="NF003764">
    <property type="entry name" value="PRK05355.1"/>
    <property type="match status" value="1"/>
</dbReference>
<dbReference type="NCBIfam" id="TIGR01364">
    <property type="entry name" value="serC_1"/>
    <property type="match status" value="1"/>
</dbReference>
<dbReference type="PANTHER" id="PTHR43247">
    <property type="entry name" value="PHOSPHOSERINE AMINOTRANSFERASE"/>
    <property type="match status" value="1"/>
</dbReference>
<dbReference type="PANTHER" id="PTHR43247:SF1">
    <property type="entry name" value="PHOSPHOSERINE AMINOTRANSFERASE"/>
    <property type="match status" value="1"/>
</dbReference>
<dbReference type="Pfam" id="PF00266">
    <property type="entry name" value="Aminotran_5"/>
    <property type="match status" value="1"/>
</dbReference>
<dbReference type="PIRSF" id="PIRSF000525">
    <property type="entry name" value="SerC"/>
    <property type="match status" value="1"/>
</dbReference>
<dbReference type="SUPFAM" id="SSF53383">
    <property type="entry name" value="PLP-dependent transferases"/>
    <property type="match status" value="1"/>
</dbReference>
<dbReference type="PROSITE" id="PS00595">
    <property type="entry name" value="AA_TRANSFER_CLASS_5"/>
    <property type="match status" value="1"/>
</dbReference>
<evidence type="ECO:0000250" key="1">
    <source>
        <dbReference type="UniProtKB" id="Q96255"/>
    </source>
</evidence>
<evidence type="ECO:0000269" key="2">
    <source>
    </source>
</evidence>
<evidence type="ECO:0000269" key="3">
    <source>
    </source>
</evidence>
<evidence type="ECO:0000269" key="4">
    <source>
    </source>
</evidence>
<evidence type="ECO:0000269" key="5">
    <source>
    </source>
</evidence>
<evidence type="ECO:0000269" key="6">
    <source>
    </source>
</evidence>
<evidence type="ECO:0000269" key="7">
    <source>
    </source>
</evidence>
<evidence type="ECO:0000303" key="8">
    <source>
    </source>
</evidence>
<evidence type="ECO:0000303" key="9">
    <source>
    </source>
</evidence>
<evidence type="ECO:0000303" key="10">
    <source>
    </source>
</evidence>
<evidence type="ECO:0000305" key="11"/>
<evidence type="ECO:0007744" key="12">
    <source>
    </source>
</evidence>
<evidence type="ECO:0007744" key="13">
    <source>
    </source>
</evidence>
<evidence type="ECO:0007829" key="14">
    <source>
        <dbReference type="PDB" id="8I28"/>
    </source>
</evidence>
<keyword id="KW-0002">3D-structure</keyword>
<keyword id="KW-0028">Amino-acid biosynthesis</keyword>
<keyword id="KW-0032">Aminotransferase</keyword>
<keyword id="KW-0597">Phosphoprotein</keyword>
<keyword id="KW-0663">Pyridoxal phosphate</keyword>
<keyword id="KW-1185">Reference proteome</keyword>
<keyword id="KW-0718">Serine biosynthesis</keyword>
<keyword id="KW-0808">Transferase</keyword>
<proteinExistence type="evidence at protein level"/>
<accession>P33330</accession>
<accession>D6W2P0</accession>
<reference key="1">
    <citation type="journal article" date="1994" name="Yeast">
        <title>A gene from Saccharomyces cerevisiae which codes for a protein with significant homology to the bacterial 3-phosphoserine aminotransferase.</title>
        <authorList>
            <person name="Belhumeur P."/>
            <person name="Fortin N."/>
            <person name="Clark M.W."/>
        </authorList>
    </citation>
    <scope>NUCLEOTIDE SEQUENCE [GENOMIC DNA]</scope>
</reference>
<reference key="2">
    <citation type="journal article" date="1995" name="Curr. Genet.">
        <title>Molecular analysis of the yeast SER1 gene encoding 3-phosphoserine aminotransferase: regulation by general control and serine repression.</title>
        <authorList>
            <person name="Melcher K."/>
            <person name="Rose M."/>
            <person name="Kunzler M."/>
            <person name="Braus G.H."/>
            <person name="Entian K.-D."/>
        </authorList>
    </citation>
    <scope>NUCLEOTIDE SEQUENCE [GENOMIC DNA]</scope>
    <scope>INDUCTION</scope>
</reference>
<reference key="3">
    <citation type="journal article" date="1997" name="Nature">
        <title>The nucleotide sequence of Saccharomyces cerevisiae chromosome XV.</title>
        <authorList>
            <person name="Dujon B."/>
            <person name="Albermann K."/>
            <person name="Aldea M."/>
            <person name="Alexandraki D."/>
            <person name="Ansorge W."/>
            <person name="Arino J."/>
            <person name="Benes V."/>
            <person name="Bohn C."/>
            <person name="Bolotin-Fukuhara M."/>
            <person name="Bordonne R."/>
            <person name="Boyer J."/>
            <person name="Camasses A."/>
            <person name="Casamayor A."/>
            <person name="Casas C."/>
            <person name="Cheret G."/>
            <person name="Cziepluch C."/>
            <person name="Daignan-Fornier B."/>
            <person name="Dang V.-D."/>
            <person name="de Haan M."/>
            <person name="Delius H."/>
            <person name="Durand P."/>
            <person name="Fairhead C."/>
            <person name="Feldmann H."/>
            <person name="Gaillon L."/>
            <person name="Galisson F."/>
            <person name="Gamo F.-J."/>
            <person name="Gancedo C."/>
            <person name="Goffeau A."/>
            <person name="Goulding S.E."/>
            <person name="Grivell L.A."/>
            <person name="Habbig B."/>
            <person name="Hand N.J."/>
            <person name="Hani J."/>
            <person name="Hattenhorst U."/>
            <person name="Hebling U."/>
            <person name="Hernando Y."/>
            <person name="Herrero E."/>
            <person name="Heumann K."/>
            <person name="Hiesel R."/>
            <person name="Hilger F."/>
            <person name="Hofmann B."/>
            <person name="Hollenberg C.P."/>
            <person name="Hughes B."/>
            <person name="Jauniaux J.-C."/>
            <person name="Kalogeropoulos A."/>
            <person name="Katsoulou C."/>
            <person name="Kordes E."/>
            <person name="Lafuente M.J."/>
            <person name="Landt O."/>
            <person name="Louis E.J."/>
            <person name="Maarse A.C."/>
            <person name="Madania A."/>
            <person name="Mannhaupt G."/>
            <person name="Marck C."/>
            <person name="Martin R.P."/>
            <person name="Mewes H.-W."/>
            <person name="Michaux G."/>
            <person name="Paces V."/>
            <person name="Parle-McDermott A.G."/>
            <person name="Pearson B.M."/>
            <person name="Perrin A."/>
            <person name="Pettersson B."/>
            <person name="Poch O."/>
            <person name="Pohl T.M."/>
            <person name="Poirey R."/>
            <person name="Portetelle D."/>
            <person name="Pujol A."/>
            <person name="Purnelle B."/>
            <person name="Ramezani Rad M."/>
            <person name="Rechmann S."/>
            <person name="Schwager C."/>
            <person name="Schweizer M."/>
            <person name="Sor F."/>
            <person name="Sterky F."/>
            <person name="Tarassov I.A."/>
            <person name="Teodoru C."/>
            <person name="Tettelin H."/>
            <person name="Thierry A."/>
            <person name="Tobiasch E."/>
            <person name="Tzermia M."/>
            <person name="Uhlen M."/>
            <person name="Unseld M."/>
            <person name="Valens M."/>
            <person name="Vandenbol M."/>
            <person name="Vetter I."/>
            <person name="Vlcek C."/>
            <person name="Voet M."/>
            <person name="Volckaert G."/>
            <person name="Voss H."/>
            <person name="Wambutt R."/>
            <person name="Wedler H."/>
            <person name="Wiemann S."/>
            <person name="Winsor B."/>
            <person name="Wolfe K.H."/>
            <person name="Zollner A."/>
            <person name="Zumstein E."/>
            <person name="Kleine K."/>
        </authorList>
    </citation>
    <scope>NUCLEOTIDE SEQUENCE [LARGE SCALE GENOMIC DNA]</scope>
    <source>
        <strain>ATCC 204508 / S288c</strain>
    </source>
</reference>
<reference key="4">
    <citation type="journal article" date="2014" name="G3 (Bethesda)">
        <title>The reference genome sequence of Saccharomyces cerevisiae: Then and now.</title>
        <authorList>
            <person name="Engel S.R."/>
            <person name="Dietrich F.S."/>
            <person name="Fisk D.G."/>
            <person name="Binkley G."/>
            <person name="Balakrishnan R."/>
            <person name="Costanzo M.C."/>
            <person name="Dwight S.S."/>
            <person name="Hitz B.C."/>
            <person name="Karra K."/>
            <person name="Nash R.S."/>
            <person name="Weng S."/>
            <person name="Wong E.D."/>
            <person name="Lloyd P."/>
            <person name="Skrzypek M.S."/>
            <person name="Miyasato S.R."/>
            <person name="Simison M."/>
            <person name="Cherry J.M."/>
        </authorList>
    </citation>
    <scope>GENOME REANNOTATION</scope>
    <source>
        <strain>ATCC 204508 / S288c</strain>
    </source>
</reference>
<reference key="5">
    <citation type="journal article" date="1992" name="Curr. Genet.">
        <title>Genetic analysis of serine biosynthesis and glucose repression in yeast.</title>
        <authorList>
            <person name="Melcher K."/>
            <person name="Entian K.D."/>
        </authorList>
    </citation>
    <scope>FUNCTION</scope>
    <scope>CATALYTIC ACTIVITY</scope>
</reference>
<reference key="6">
    <citation type="journal article" date="1999" name="Yeast">
        <title>ade9 is an allele of SER1 and plays an indirect role in purine biosynthesis.</title>
        <authorList>
            <person name="Buc P.S."/>
            <person name="Rolfes R.J."/>
        </authorList>
    </citation>
    <scope>FUNCTION</scope>
    <scope>DISRUPTION PHENOTYPE</scope>
</reference>
<reference key="7">
    <citation type="journal article" date="2003" name="Nature">
        <title>Global analysis of protein expression in yeast.</title>
        <authorList>
            <person name="Ghaemmaghami S."/>
            <person name="Huh W.-K."/>
            <person name="Bower K."/>
            <person name="Howson R.W."/>
            <person name="Belle A."/>
            <person name="Dephoure N."/>
            <person name="O'Shea E.K."/>
            <person name="Weissman J.S."/>
        </authorList>
    </citation>
    <scope>LEVEL OF PROTEIN EXPRESSION [LARGE SCALE ANALYSIS]</scope>
</reference>
<reference key="8">
    <citation type="journal article" date="2008" name="Mol. Cell. Proteomics">
        <title>A multidimensional chromatography technology for in-depth phosphoproteome analysis.</title>
        <authorList>
            <person name="Albuquerque C.P."/>
            <person name="Smolka M.B."/>
            <person name="Payne S.H."/>
            <person name="Bafna V."/>
            <person name="Eng J."/>
            <person name="Zhou H."/>
        </authorList>
    </citation>
    <scope>PHOSPHORYLATION [LARGE SCALE ANALYSIS] AT THR-20 AND SER-112</scope>
    <scope>IDENTIFICATION BY MASS SPECTROMETRY [LARGE SCALE ANALYSIS]</scope>
</reference>
<reference key="9">
    <citation type="journal article" date="2009" name="Science">
        <title>Global analysis of Cdk1 substrate phosphorylation sites provides insights into evolution.</title>
        <authorList>
            <person name="Holt L.J."/>
            <person name="Tuch B.B."/>
            <person name="Villen J."/>
            <person name="Johnson A.D."/>
            <person name="Gygi S.P."/>
            <person name="Morgan D.O."/>
        </authorList>
    </citation>
    <scope>PHOSPHORYLATION [LARGE SCALE ANALYSIS] AT THR-20</scope>
    <scope>IDENTIFICATION BY MASS SPECTROMETRY [LARGE SCALE ANALYSIS]</scope>
</reference>
<reference key="10">
    <citation type="journal article" date="2012" name="Nat. Cell Biol.">
        <title>Dissecting DNA damage response pathways by analysing protein localization and abundance changes during DNA replication stress.</title>
        <authorList>
            <person name="Tkach J.M."/>
            <person name="Yimit A."/>
            <person name="Lee A.Y."/>
            <person name="Riffle M."/>
            <person name="Costanzo M."/>
            <person name="Jaschob D."/>
            <person name="Hendry J.A."/>
            <person name="Ou J."/>
            <person name="Moffat J."/>
            <person name="Boone C."/>
            <person name="Davis T.N."/>
            <person name="Nislow C."/>
            <person name="Brown G.W."/>
        </authorList>
    </citation>
    <scope>INDUCTION</scope>
</reference>
<reference key="11">
    <citation type="journal article" date="2023" name="Int. J. Mol. Sci.">
        <title>Molecular Structure of Phosphoserine Aminotransferase from Saccharomyces cerevisiae.</title>
        <authorList>
            <person name="Jang J."/>
            <person name="Chang J.H."/>
        </authorList>
    </citation>
    <scope>X-RAY CRYSTALLOGRAPHY (2.80 ANGSTROMS)</scope>
    <scope>SUBUNIT</scope>
</reference>
<comment type="function">
    <text evidence="2 3">Phosphoserine aminotransferase (PSAT) is a pyridoxal 5'-phosphate-dependent enzyme involved in the second step of the phosphorylated pathway of serine biosynthesis (PubMed:1326413). Catalyzes the reversible conversion of 3-phosphohydroxypyruvate to phosphoserine and of 3-hydroxy-2-oxo-4-phosphonooxybutanoate to phosphohydroxythreonine (PubMed:1326413). Plays an indirect role in purine biosynthesis (PubMed:10509016).</text>
</comment>
<comment type="catalytic activity">
    <reaction evidence="3">
        <text>O-phospho-L-serine + 2-oxoglutarate = 3-phosphooxypyruvate + L-glutamate</text>
        <dbReference type="Rhea" id="RHEA:14329"/>
        <dbReference type="ChEBI" id="CHEBI:16810"/>
        <dbReference type="ChEBI" id="CHEBI:18110"/>
        <dbReference type="ChEBI" id="CHEBI:29985"/>
        <dbReference type="ChEBI" id="CHEBI:57524"/>
        <dbReference type="EC" id="2.6.1.52"/>
    </reaction>
</comment>
<comment type="catalytic activity">
    <reaction evidence="3">
        <text>4-(phosphooxy)-L-threonine + 2-oxoglutarate = (R)-3-hydroxy-2-oxo-4-phosphooxybutanoate + L-glutamate</text>
        <dbReference type="Rhea" id="RHEA:16573"/>
        <dbReference type="ChEBI" id="CHEBI:16810"/>
        <dbReference type="ChEBI" id="CHEBI:29985"/>
        <dbReference type="ChEBI" id="CHEBI:58452"/>
        <dbReference type="ChEBI" id="CHEBI:58538"/>
        <dbReference type="EC" id="2.6.1.52"/>
    </reaction>
</comment>
<comment type="cofactor">
    <cofactor evidence="1">
        <name>pyridoxal 5'-phosphate</name>
        <dbReference type="ChEBI" id="CHEBI:597326"/>
    </cofactor>
    <text evidence="1">Binds 1 pyridoxal phosphate per subunit.</text>
</comment>
<comment type="pathway">
    <text evidence="3">Amino-acid biosynthesis; L-serine biosynthesis; L-serine from 3-phospho-D-glycerate: step 2/3.</text>
</comment>
<comment type="subunit">
    <text evidence="6">Homodimer.</text>
</comment>
<comment type="interaction">
    <interactant intactId="EBI-16970">
        <id>P33330</id>
    </interactant>
    <interactant intactId="EBI-19703">
        <id>P22515</id>
        <label>UBA1</label>
    </interactant>
    <organismsDiffer>false</organismsDiffer>
    <experiments>2</experiments>
</comment>
<comment type="induction">
    <text evidence="5 7">Expression is regulated by the general control of amino acid biosynthesis mediated by GCN4 (PubMed:7553933). Expression is increased in response to DNA replication stress (PubMed:22842922).</text>
</comment>
<comment type="disruption phenotype">
    <text evidence="2">Impairs growth in absence of serine and leads to adenine bradytrophy (slow growth).</text>
</comment>
<comment type="miscellaneous">
    <text evidence="4">Present with 15900 molecules/cell in log phase SD medium.</text>
</comment>
<comment type="similarity">
    <text evidence="11">Belongs to the class-V pyridoxal-phosphate-dependent aminotransferase family. SerC subfamily.</text>
</comment>
<gene>
    <name evidence="9" type="primary">SER1</name>
    <name evidence="8" type="synonym">ADE9</name>
    <name type="synonym">SERC</name>
    <name type="ordered locus">YOR184W</name>
</gene>
<protein>
    <recommendedName>
        <fullName evidence="10">Phosphoserine aminotransferase</fullName>
        <shortName evidence="10">PSAT</shortName>
        <ecNumber evidence="3">2.6.1.52</ecNumber>
    </recommendedName>
    <alternativeName>
        <fullName>Phosphohydroxythreonine aminotransferase</fullName>
    </alternativeName>
    <alternativeName>
        <fullName evidence="9">Serine requiring protein 1</fullName>
    </alternativeName>
</protein>